<accession>O50519</accession>
<sequence>MPELVFFSGTMDCGKSTLALQIEHNRSARGLAGMIFTRDDRAGEGKLSSRLGLVTDAVEVGDGQDLYAHVVDHLSQGGRVDYVIADEAQFLAPDQIDQLARVVDDLDVDVYAFGITTDFRSKLFPGSQRLVELADRVEVLQVEALCWCGARATHNARTVGGVMVVEGAQVVVGDVAQSPDEIGYEVLCRRHHRRRMTSATARAAALSPDVLPVTAT</sequence>
<protein>
    <recommendedName>
        <fullName evidence="1">Thymidine kinase</fullName>
        <ecNumber evidence="1">2.7.1.21</ecNumber>
    </recommendedName>
</protein>
<dbReference type="EC" id="2.7.1.21" evidence="1"/>
<dbReference type="EMBL" id="AL939125">
    <property type="protein sequence ID" value="CAA15802.1"/>
    <property type="molecule type" value="Genomic_DNA"/>
</dbReference>
<dbReference type="PIR" id="T35881">
    <property type="entry name" value="T35881"/>
</dbReference>
<dbReference type="RefSeq" id="NP_629968.1">
    <property type="nucleotide sequence ID" value="NC_003888.3"/>
</dbReference>
<dbReference type="RefSeq" id="WP_003973175.1">
    <property type="nucleotide sequence ID" value="NZ_VNID01000007.1"/>
</dbReference>
<dbReference type="SMR" id="O50519"/>
<dbReference type="STRING" id="100226.gene:17763505"/>
<dbReference type="PaxDb" id="100226-SCO5845"/>
<dbReference type="KEGG" id="sco:SCO5845"/>
<dbReference type="PATRIC" id="fig|100226.15.peg.5943"/>
<dbReference type="eggNOG" id="COG1435">
    <property type="taxonomic scope" value="Bacteria"/>
</dbReference>
<dbReference type="HOGENOM" id="CLU_064400_2_0_11"/>
<dbReference type="InParanoid" id="O50519"/>
<dbReference type="OrthoDB" id="9781579at2"/>
<dbReference type="PhylomeDB" id="O50519"/>
<dbReference type="BRENDA" id="2.7.1.21">
    <property type="organism ID" value="5998"/>
</dbReference>
<dbReference type="Proteomes" id="UP000001973">
    <property type="component" value="Chromosome"/>
</dbReference>
<dbReference type="GO" id="GO:0005829">
    <property type="term" value="C:cytosol"/>
    <property type="evidence" value="ECO:0000318"/>
    <property type="project" value="GO_Central"/>
</dbReference>
<dbReference type="GO" id="GO:0005524">
    <property type="term" value="F:ATP binding"/>
    <property type="evidence" value="ECO:0007669"/>
    <property type="project" value="UniProtKB-UniRule"/>
</dbReference>
<dbReference type="GO" id="GO:0004797">
    <property type="term" value="F:thymidine kinase activity"/>
    <property type="evidence" value="ECO:0000318"/>
    <property type="project" value="GO_Central"/>
</dbReference>
<dbReference type="GO" id="GO:0071897">
    <property type="term" value="P:DNA biosynthetic process"/>
    <property type="evidence" value="ECO:0007669"/>
    <property type="project" value="UniProtKB-KW"/>
</dbReference>
<dbReference type="GO" id="GO:0046104">
    <property type="term" value="P:thymidine metabolic process"/>
    <property type="evidence" value="ECO:0000318"/>
    <property type="project" value="GO_Central"/>
</dbReference>
<dbReference type="FunFam" id="3.40.50.300:FF:002162">
    <property type="entry name" value="Thymidine kinase"/>
    <property type="match status" value="1"/>
</dbReference>
<dbReference type="Gene3D" id="3.30.60.20">
    <property type="match status" value="1"/>
</dbReference>
<dbReference type="Gene3D" id="3.40.50.300">
    <property type="entry name" value="P-loop containing nucleotide triphosphate hydrolases"/>
    <property type="match status" value="1"/>
</dbReference>
<dbReference type="HAMAP" id="MF_00124">
    <property type="entry name" value="Thymidine_kinase"/>
    <property type="match status" value="1"/>
</dbReference>
<dbReference type="InterPro" id="IPR027417">
    <property type="entry name" value="P-loop_NTPase"/>
</dbReference>
<dbReference type="InterPro" id="IPR001267">
    <property type="entry name" value="Thymidine_kinase"/>
</dbReference>
<dbReference type="NCBIfam" id="NF003297">
    <property type="entry name" value="PRK04296.1-2"/>
    <property type="match status" value="1"/>
</dbReference>
<dbReference type="PANTHER" id="PTHR11441">
    <property type="entry name" value="THYMIDINE KINASE"/>
    <property type="match status" value="1"/>
</dbReference>
<dbReference type="PANTHER" id="PTHR11441:SF0">
    <property type="entry name" value="THYMIDINE KINASE, CYTOSOLIC"/>
    <property type="match status" value="1"/>
</dbReference>
<dbReference type="Pfam" id="PF00265">
    <property type="entry name" value="TK"/>
    <property type="match status" value="1"/>
</dbReference>
<dbReference type="PIRSF" id="PIRSF035805">
    <property type="entry name" value="TK_cell"/>
    <property type="match status" value="1"/>
</dbReference>
<dbReference type="SUPFAM" id="SSF57716">
    <property type="entry name" value="Glucocorticoid receptor-like (DNA-binding domain)"/>
    <property type="match status" value="1"/>
</dbReference>
<dbReference type="SUPFAM" id="SSF52540">
    <property type="entry name" value="P-loop containing nucleoside triphosphate hydrolases"/>
    <property type="match status" value="1"/>
</dbReference>
<feature type="chain" id="PRO_0000175029" description="Thymidine kinase">
    <location>
        <begin position="1"/>
        <end position="216"/>
    </location>
</feature>
<feature type="active site" description="Proton acceptor" evidence="1">
    <location>
        <position position="87"/>
    </location>
</feature>
<feature type="binding site" evidence="1">
    <location>
        <begin position="9"/>
        <end position="16"/>
    </location>
    <ligand>
        <name>ATP</name>
        <dbReference type="ChEBI" id="CHEBI:30616"/>
    </ligand>
</feature>
<feature type="binding site" evidence="1">
    <location>
        <begin position="86"/>
        <end position="89"/>
    </location>
    <ligand>
        <name>ATP</name>
        <dbReference type="ChEBI" id="CHEBI:30616"/>
    </ligand>
</feature>
<name>KITH_STRCO</name>
<organism>
    <name type="scientific">Streptomyces coelicolor (strain ATCC BAA-471 / A3(2) / M145)</name>
    <dbReference type="NCBI Taxonomy" id="100226"/>
    <lineage>
        <taxon>Bacteria</taxon>
        <taxon>Bacillati</taxon>
        <taxon>Actinomycetota</taxon>
        <taxon>Actinomycetes</taxon>
        <taxon>Kitasatosporales</taxon>
        <taxon>Streptomycetaceae</taxon>
        <taxon>Streptomyces</taxon>
        <taxon>Streptomyces albidoflavus group</taxon>
    </lineage>
</organism>
<keyword id="KW-0067">ATP-binding</keyword>
<keyword id="KW-0963">Cytoplasm</keyword>
<keyword id="KW-0237">DNA synthesis</keyword>
<keyword id="KW-0418">Kinase</keyword>
<keyword id="KW-0547">Nucleotide-binding</keyword>
<keyword id="KW-1185">Reference proteome</keyword>
<keyword id="KW-0808">Transferase</keyword>
<gene>
    <name evidence="1" type="primary">tdk</name>
    <name type="ordered locus">SCO5845</name>
    <name type="ORF">SC9B10.12</name>
</gene>
<proteinExistence type="inferred from homology"/>
<evidence type="ECO:0000255" key="1">
    <source>
        <dbReference type="HAMAP-Rule" id="MF_00124"/>
    </source>
</evidence>
<comment type="catalytic activity">
    <reaction evidence="1">
        <text>thymidine + ATP = dTMP + ADP + H(+)</text>
        <dbReference type="Rhea" id="RHEA:19129"/>
        <dbReference type="ChEBI" id="CHEBI:15378"/>
        <dbReference type="ChEBI" id="CHEBI:17748"/>
        <dbReference type="ChEBI" id="CHEBI:30616"/>
        <dbReference type="ChEBI" id="CHEBI:63528"/>
        <dbReference type="ChEBI" id="CHEBI:456216"/>
        <dbReference type="EC" id="2.7.1.21"/>
    </reaction>
</comment>
<comment type="subunit">
    <text evidence="1">Homotetramer.</text>
</comment>
<comment type="subcellular location">
    <subcellularLocation>
        <location evidence="1">Cytoplasm</location>
    </subcellularLocation>
</comment>
<comment type="similarity">
    <text evidence="1">Belongs to the thymidine kinase family.</text>
</comment>
<reference key="1">
    <citation type="journal article" date="2002" name="Nature">
        <title>Complete genome sequence of the model actinomycete Streptomyces coelicolor A3(2).</title>
        <authorList>
            <person name="Bentley S.D."/>
            <person name="Chater K.F."/>
            <person name="Cerdeno-Tarraga A.-M."/>
            <person name="Challis G.L."/>
            <person name="Thomson N.R."/>
            <person name="James K.D."/>
            <person name="Harris D.E."/>
            <person name="Quail M.A."/>
            <person name="Kieser H."/>
            <person name="Harper D."/>
            <person name="Bateman A."/>
            <person name="Brown S."/>
            <person name="Chandra G."/>
            <person name="Chen C.W."/>
            <person name="Collins M."/>
            <person name="Cronin A."/>
            <person name="Fraser A."/>
            <person name="Goble A."/>
            <person name="Hidalgo J."/>
            <person name="Hornsby T."/>
            <person name="Howarth S."/>
            <person name="Huang C.-H."/>
            <person name="Kieser T."/>
            <person name="Larke L."/>
            <person name="Murphy L.D."/>
            <person name="Oliver K."/>
            <person name="O'Neil S."/>
            <person name="Rabbinowitsch E."/>
            <person name="Rajandream M.A."/>
            <person name="Rutherford K.M."/>
            <person name="Rutter S."/>
            <person name="Seeger K."/>
            <person name="Saunders D."/>
            <person name="Sharp S."/>
            <person name="Squares R."/>
            <person name="Squares S."/>
            <person name="Taylor K."/>
            <person name="Warren T."/>
            <person name="Wietzorrek A."/>
            <person name="Woodward J.R."/>
            <person name="Barrell B.G."/>
            <person name="Parkhill J."/>
            <person name="Hopwood D.A."/>
        </authorList>
    </citation>
    <scope>NUCLEOTIDE SEQUENCE [LARGE SCALE GENOMIC DNA]</scope>
    <source>
        <strain>ATCC BAA-471 / A3(2) / M145</strain>
    </source>
</reference>